<proteinExistence type="inferred from homology"/>
<sequence>MPAIPSHVPEPSRTDPALIRNFCIIAHIDHGKSTLADRMLQLTGVVEQRQMRAQYLDRMDIERERGITIKSQAVRLPWAPSHDKGATHILNMIDTPGHVDFTYEVSRSLAACEGTILLVDAAQGIEAQTLANLYLAMENDLTIIPVLNKIDLPAAQPEKFAEELANLVGCDPDDVLKVSAKTGLGVDVLLDKVVAEVPAPVGVKDAPARAMIFDSVYDSYRGVVTYVRVIDGQLNKRERIRMMSTGATHELLEIGTNSPEMLSADGLGVGEVGYLITGVKDVRQSKVGDTVTSQHKGATEALGGYKDPRPMVFSGLYPLDGSDYPELREALDKLQLNDAALVYEPETSAALGFGFRVGFLGLLHLDVIRERLEREFGLDLIATAPNVVYRVIMEDGTEHTVTNPSEFPEGKINEVYEPVVRATILAPTEFIGSIMELCQTRRGTLLGMDYLSEDRVEIRYTLPLAEIVFDFFDQLKSKTRGYASLDYEPTGEQTSSLVKVDILLHGDKVDAFSAITHKDAAYAYGVRLVAKLRELIPRQAFEVPIQAAIGSRVIARETIRAIRKDVLAKCYGGDISRKRKLLEKQKEGKKRMKMVGSVEVPQEAFIAVLSSDDSAGSGKGKK</sequence>
<dbReference type="EC" id="3.6.5.n1" evidence="1"/>
<dbReference type="EMBL" id="AL939113">
    <property type="protein sequence ID" value="CAB66240.1"/>
    <property type="molecule type" value="Genomic_DNA"/>
</dbReference>
<dbReference type="RefSeq" id="NP_626800.1">
    <property type="nucleotide sequence ID" value="NC_003888.3"/>
</dbReference>
<dbReference type="RefSeq" id="WP_003976242.1">
    <property type="nucleotide sequence ID" value="NZ_VNID01000001.1"/>
</dbReference>
<dbReference type="SMR" id="Q9RDC9"/>
<dbReference type="FunCoup" id="Q9RDC9">
    <property type="interactions" value="329"/>
</dbReference>
<dbReference type="STRING" id="100226.gene:17760164"/>
<dbReference type="PaxDb" id="100226-SCO2562"/>
<dbReference type="GeneID" id="91386442"/>
<dbReference type="KEGG" id="sco:SCO2562"/>
<dbReference type="PATRIC" id="fig|100226.15.peg.2607"/>
<dbReference type="eggNOG" id="COG0481">
    <property type="taxonomic scope" value="Bacteria"/>
</dbReference>
<dbReference type="HOGENOM" id="CLU_009995_3_3_11"/>
<dbReference type="InParanoid" id="Q9RDC9"/>
<dbReference type="OrthoDB" id="9801472at2"/>
<dbReference type="PhylomeDB" id="Q9RDC9"/>
<dbReference type="Proteomes" id="UP000001973">
    <property type="component" value="Chromosome"/>
</dbReference>
<dbReference type="GO" id="GO:0005886">
    <property type="term" value="C:plasma membrane"/>
    <property type="evidence" value="ECO:0007669"/>
    <property type="project" value="UniProtKB-SubCell"/>
</dbReference>
<dbReference type="GO" id="GO:0005525">
    <property type="term" value="F:GTP binding"/>
    <property type="evidence" value="ECO:0007669"/>
    <property type="project" value="UniProtKB-UniRule"/>
</dbReference>
<dbReference type="GO" id="GO:0003924">
    <property type="term" value="F:GTPase activity"/>
    <property type="evidence" value="ECO:0007669"/>
    <property type="project" value="UniProtKB-UniRule"/>
</dbReference>
<dbReference type="GO" id="GO:0043022">
    <property type="term" value="F:ribosome binding"/>
    <property type="evidence" value="ECO:0000318"/>
    <property type="project" value="GO_Central"/>
</dbReference>
<dbReference type="GO" id="GO:0003746">
    <property type="term" value="F:translation elongation factor activity"/>
    <property type="evidence" value="ECO:0007669"/>
    <property type="project" value="UniProtKB-UniRule"/>
</dbReference>
<dbReference type="GO" id="GO:0045727">
    <property type="term" value="P:positive regulation of translation"/>
    <property type="evidence" value="ECO:0000318"/>
    <property type="project" value="GO_Central"/>
</dbReference>
<dbReference type="CDD" id="cd03699">
    <property type="entry name" value="EF4_II"/>
    <property type="match status" value="1"/>
</dbReference>
<dbReference type="CDD" id="cd16260">
    <property type="entry name" value="EF4_III"/>
    <property type="match status" value="1"/>
</dbReference>
<dbReference type="CDD" id="cd01890">
    <property type="entry name" value="LepA"/>
    <property type="match status" value="1"/>
</dbReference>
<dbReference type="CDD" id="cd03709">
    <property type="entry name" value="lepA_C"/>
    <property type="match status" value="1"/>
</dbReference>
<dbReference type="FunFam" id="3.30.70.240:FF:000011">
    <property type="entry name" value="Elongation factor 4"/>
    <property type="match status" value="1"/>
</dbReference>
<dbReference type="FunFam" id="3.40.50.300:FF:000078">
    <property type="entry name" value="Elongation factor 4"/>
    <property type="match status" value="1"/>
</dbReference>
<dbReference type="FunFam" id="2.40.30.10:FF:000015">
    <property type="entry name" value="Translation factor GUF1, mitochondrial"/>
    <property type="match status" value="1"/>
</dbReference>
<dbReference type="FunFam" id="3.30.70.2570:FF:000001">
    <property type="entry name" value="Translation factor GUF1, mitochondrial"/>
    <property type="match status" value="1"/>
</dbReference>
<dbReference type="FunFam" id="3.30.70.870:FF:000004">
    <property type="entry name" value="Translation factor GUF1, mitochondrial"/>
    <property type="match status" value="1"/>
</dbReference>
<dbReference type="Gene3D" id="3.30.70.240">
    <property type="match status" value="1"/>
</dbReference>
<dbReference type="Gene3D" id="3.30.70.2570">
    <property type="entry name" value="Elongation factor 4, C-terminal domain"/>
    <property type="match status" value="1"/>
</dbReference>
<dbReference type="Gene3D" id="3.30.70.870">
    <property type="entry name" value="Elongation Factor G (Translational Gtpase), domain 3"/>
    <property type="match status" value="1"/>
</dbReference>
<dbReference type="Gene3D" id="3.40.50.300">
    <property type="entry name" value="P-loop containing nucleotide triphosphate hydrolases"/>
    <property type="match status" value="1"/>
</dbReference>
<dbReference type="Gene3D" id="2.40.30.10">
    <property type="entry name" value="Translation factors"/>
    <property type="match status" value="1"/>
</dbReference>
<dbReference type="HAMAP" id="MF_00071">
    <property type="entry name" value="LepA"/>
    <property type="match status" value="1"/>
</dbReference>
<dbReference type="InterPro" id="IPR006297">
    <property type="entry name" value="EF-4"/>
</dbReference>
<dbReference type="InterPro" id="IPR035647">
    <property type="entry name" value="EFG_III/V"/>
</dbReference>
<dbReference type="InterPro" id="IPR000640">
    <property type="entry name" value="EFG_V-like"/>
</dbReference>
<dbReference type="InterPro" id="IPR004161">
    <property type="entry name" value="EFTu-like_2"/>
</dbReference>
<dbReference type="InterPro" id="IPR031157">
    <property type="entry name" value="G_TR_CS"/>
</dbReference>
<dbReference type="InterPro" id="IPR038363">
    <property type="entry name" value="LepA_C_sf"/>
</dbReference>
<dbReference type="InterPro" id="IPR013842">
    <property type="entry name" value="LepA_CTD"/>
</dbReference>
<dbReference type="InterPro" id="IPR035654">
    <property type="entry name" value="LepA_IV"/>
</dbReference>
<dbReference type="InterPro" id="IPR027417">
    <property type="entry name" value="P-loop_NTPase"/>
</dbReference>
<dbReference type="InterPro" id="IPR005225">
    <property type="entry name" value="Small_GTP-bd"/>
</dbReference>
<dbReference type="InterPro" id="IPR000795">
    <property type="entry name" value="T_Tr_GTP-bd_dom"/>
</dbReference>
<dbReference type="InterPro" id="IPR009000">
    <property type="entry name" value="Transl_B-barrel_sf"/>
</dbReference>
<dbReference type="NCBIfam" id="TIGR01393">
    <property type="entry name" value="lepA"/>
    <property type="match status" value="1"/>
</dbReference>
<dbReference type="NCBIfam" id="TIGR00231">
    <property type="entry name" value="small_GTP"/>
    <property type="match status" value="1"/>
</dbReference>
<dbReference type="PANTHER" id="PTHR43512:SF4">
    <property type="entry name" value="TRANSLATION FACTOR GUF1 HOMOLOG, CHLOROPLASTIC"/>
    <property type="match status" value="1"/>
</dbReference>
<dbReference type="PANTHER" id="PTHR43512">
    <property type="entry name" value="TRANSLATION FACTOR GUF1-RELATED"/>
    <property type="match status" value="1"/>
</dbReference>
<dbReference type="Pfam" id="PF00679">
    <property type="entry name" value="EFG_C"/>
    <property type="match status" value="1"/>
</dbReference>
<dbReference type="Pfam" id="PF00009">
    <property type="entry name" value="GTP_EFTU"/>
    <property type="match status" value="1"/>
</dbReference>
<dbReference type="Pfam" id="PF03144">
    <property type="entry name" value="GTP_EFTU_D2"/>
    <property type="match status" value="1"/>
</dbReference>
<dbReference type="Pfam" id="PF06421">
    <property type="entry name" value="LepA_C"/>
    <property type="match status" value="1"/>
</dbReference>
<dbReference type="PRINTS" id="PR00315">
    <property type="entry name" value="ELONGATNFCT"/>
</dbReference>
<dbReference type="SMART" id="SM00838">
    <property type="entry name" value="EFG_C"/>
    <property type="match status" value="1"/>
</dbReference>
<dbReference type="SUPFAM" id="SSF54980">
    <property type="entry name" value="EF-G C-terminal domain-like"/>
    <property type="match status" value="2"/>
</dbReference>
<dbReference type="SUPFAM" id="SSF52540">
    <property type="entry name" value="P-loop containing nucleoside triphosphate hydrolases"/>
    <property type="match status" value="1"/>
</dbReference>
<dbReference type="SUPFAM" id="SSF50447">
    <property type="entry name" value="Translation proteins"/>
    <property type="match status" value="1"/>
</dbReference>
<dbReference type="PROSITE" id="PS00301">
    <property type="entry name" value="G_TR_1"/>
    <property type="match status" value="1"/>
</dbReference>
<dbReference type="PROSITE" id="PS51722">
    <property type="entry name" value="G_TR_2"/>
    <property type="match status" value="1"/>
</dbReference>
<feature type="chain" id="PRO_0000176351" description="Elongation factor 4">
    <location>
        <begin position="1"/>
        <end position="622"/>
    </location>
</feature>
<feature type="domain" description="tr-type G">
    <location>
        <begin position="17"/>
        <end position="201"/>
    </location>
</feature>
<feature type="binding site" evidence="1">
    <location>
        <begin position="29"/>
        <end position="34"/>
    </location>
    <ligand>
        <name>GTP</name>
        <dbReference type="ChEBI" id="CHEBI:37565"/>
    </ligand>
</feature>
<feature type="binding site" evidence="1">
    <location>
        <begin position="148"/>
        <end position="151"/>
    </location>
    <ligand>
        <name>GTP</name>
        <dbReference type="ChEBI" id="CHEBI:37565"/>
    </ligand>
</feature>
<reference key="1">
    <citation type="journal article" date="2002" name="Nature">
        <title>Complete genome sequence of the model actinomycete Streptomyces coelicolor A3(2).</title>
        <authorList>
            <person name="Bentley S.D."/>
            <person name="Chater K.F."/>
            <person name="Cerdeno-Tarraga A.-M."/>
            <person name="Challis G.L."/>
            <person name="Thomson N.R."/>
            <person name="James K.D."/>
            <person name="Harris D.E."/>
            <person name="Quail M.A."/>
            <person name="Kieser H."/>
            <person name="Harper D."/>
            <person name="Bateman A."/>
            <person name="Brown S."/>
            <person name="Chandra G."/>
            <person name="Chen C.W."/>
            <person name="Collins M."/>
            <person name="Cronin A."/>
            <person name="Fraser A."/>
            <person name="Goble A."/>
            <person name="Hidalgo J."/>
            <person name="Hornsby T."/>
            <person name="Howarth S."/>
            <person name="Huang C.-H."/>
            <person name="Kieser T."/>
            <person name="Larke L."/>
            <person name="Murphy L.D."/>
            <person name="Oliver K."/>
            <person name="O'Neil S."/>
            <person name="Rabbinowitsch E."/>
            <person name="Rajandream M.A."/>
            <person name="Rutherford K.M."/>
            <person name="Rutter S."/>
            <person name="Seeger K."/>
            <person name="Saunders D."/>
            <person name="Sharp S."/>
            <person name="Squares R."/>
            <person name="Squares S."/>
            <person name="Taylor K."/>
            <person name="Warren T."/>
            <person name="Wietzorrek A."/>
            <person name="Woodward J.R."/>
            <person name="Barrell B.G."/>
            <person name="Parkhill J."/>
            <person name="Hopwood D.A."/>
        </authorList>
    </citation>
    <scope>NUCLEOTIDE SEQUENCE [LARGE SCALE GENOMIC DNA]</scope>
    <source>
        <strain>ATCC BAA-471 / A3(2) / M145</strain>
    </source>
</reference>
<protein>
    <recommendedName>
        <fullName evidence="1">Elongation factor 4</fullName>
        <shortName evidence="1">EF-4</shortName>
        <ecNumber evidence="1">3.6.5.n1</ecNumber>
    </recommendedName>
    <alternativeName>
        <fullName evidence="1">Ribosomal back-translocase LepA</fullName>
    </alternativeName>
</protein>
<comment type="function">
    <text evidence="1">Required for accurate and efficient protein synthesis under certain stress conditions. May act as a fidelity factor of the translation reaction, by catalyzing a one-codon backward translocation of tRNAs on improperly translocated ribosomes. Back-translocation proceeds from a post-translocation (POST) complex to a pre-translocation (PRE) complex, thus giving elongation factor G a second chance to translocate the tRNAs correctly. Binds to ribosomes in a GTP-dependent manner.</text>
</comment>
<comment type="catalytic activity">
    <reaction evidence="1">
        <text>GTP + H2O = GDP + phosphate + H(+)</text>
        <dbReference type="Rhea" id="RHEA:19669"/>
        <dbReference type="ChEBI" id="CHEBI:15377"/>
        <dbReference type="ChEBI" id="CHEBI:15378"/>
        <dbReference type="ChEBI" id="CHEBI:37565"/>
        <dbReference type="ChEBI" id="CHEBI:43474"/>
        <dbReference type="ChEBI" id="CHEBI:58189"/>
        <dbReference type="EC" id="3.6.5.n1"/>
    </reaction>
</comment>
<comment type="subcellular location">
    <subcellularLocation>
        <location evidence="1">Cell membrane</location>
        <topology evidence="1">Peripheral membrane protein</topology>
        <orientation evidence="1">Cytoplasmic side</orientation>
    </subcellularLocation>
</comment>
<comment type="similarity">
    <text evidence="1">Belongs to the TRAFAC class translation factor GTPase superfamily. Classic translation factor GTPase family. LepA subfamily.</text>
</comment>
<accession>Q9RDC9</accession>
<evidence type="ECO:0000255" key="1">
    <source>
        <dbReference type="HAMAP-Rule" id="MF_00071"/>
    </source>
</evidence>
<name>LEPA_STRCO</name>
<gene>
    <name evidence="1" type="primary">lepA</name>
    <name type="ordered locus">SCO2562</name>
    <name type="ORF">SCC77.29c</name>
</gene>
<keyword id="KW-1003">Cell membrane</keyword>
<keyword id="KW-0342">GTP-binding</keyword>
<keyword id="KW-0378">Hydrolase</keyword>
<keyword id="KW-0472">Membrane</keyword>
<keyword id="KW-0547">Nucleotide-binding</keyword>
<keyword id="KW-0648">Protein biosynthesis</keyword>
<keyword id="KW-1185">Reference proteome</keyword>
<organism>
    <name type="scientific">Streptomyces coelicolor (strain ATCC BAA-471 / A3(2) / M145)</name>
    <dbReference type="NCBI Taxonomy" id="100226"/>
    <lineage>
        <taxon>Bacteria</taxon>
        <taxon>Bacillati</taxon>
        <taxon>Actinomycetota</taxon>
        <taxon>Actinomycetes</taxon>
        <taxon>Kitasatosporales</taxon>
        <taxon>Streptomycetaceae</taxon>
        <taxon>Streptomyces</taxon>
        <taxon>Streptomyces albidoflavus group</taxon>
    </lineage>
</organism>